<protein>
    <recommendedName>
        <fullName evidence="1">Nucleoid-associated protein XOO1065</fullName>
    </recommendedName>
</protein>
<gene>
    <name type="ordered locus">XOO1065</name>
</gene>
<name>Y1065_XANOR</name>
<dbReference type="EMBL" id="AE013598">
    <property type="protein sequence ID" value="AAW74319.1"/>
    <property type="molecule type" value="Genomic_DNA"/>
</dbReference>
<dbReference type="SMR" id="Q5H402"/>
<dbReference type="STRING" id="291331.XOO1065"/>
<dbReference type="KEGG" id="xoo:XOO1065"/>
<dbReference type="HOGENOM" id="CLU_140930_0_0_6"/>
<dbReference type="Proteomes" id="UP000006735">
    <property type="component" value="Chromosome"/>
</dbReference>
<dbReference type="GO" id="GO:0043590">
    <property type="term" value="C:bacterial nucleoid"/>
    <property type="evidence" value="ECO:0007669"/>
    <property type="project" value="UniProtKB-UniRule"/>
</dbReference>
<dbReference type="GO" id="GO:0005829">
    <property type="term" value="C:cytosol"/>
    <property type="evidence" value="ECO:0007669"/>
    <property type="project" value="TreeGrafter"/>
</dbReference>
<dbReference type="GO" id="GO:0003677">
    <property type="term" value="F:DNA binding"/>
    <property type="evidence" value="ECO:0007669"/>
    <property type="project" value="UniProtKB-UniRule"/>
</dbReference>
<dbReference type="FunFam" id="3.30.1310.10:FF:000001">
    <property type="entry name" value="Nucleoid-associated protein YbaB"/>
    <property type="match status" value="1"/>
</dbReference>
<dbReference type="Gene3D" id="3.30.1310.10">
    <property type="entry name" value="Nucleoid-associated protein YbaB-like domain"/>
    <property type="match status" value="1"/>
</dbReference>
<dbReference type="HAMAP" id="MF_00274">
    <property type="entry name" value="DNA_YbaB_EbfC"/>
    <property type="match status" value="1"/>
</dbReference>
<dbReference type="InterPro" id="IPR036894">
    <property type="entry name" value="YbaB-like_sf"/>
</dbReference>
<dbReference type="InterPro" id="IPR004401">
    <property type="entry name" value="YbaB/EbfC"/>
</dbReference>
<dbReference type="NCBIfam" id="TIGR00103">
    <property type="entry name" value="DNA_YbaB_EbfC"/>
    <property type="match status" value="1"/>
</dbReference>
<dbReference type="PANTHER" id="PTHR33449">
    <property type="entry name" value="NUCLEOID-ASSOCIATED PROTEIN YBAB"/>
    <property type="match status" value="1"/>
</dbReference>
<dbReference type="PANTHER" id="PTHR33449:SF1">
    <property type="entry name" value="NUCLEOID-ASSOCIATED PROTEIN YBAB"/>
    <property type="match status" value="1"/>
</dbReference>
<dbReference type="Pfam" id="PF02575">
    <property type="entry name" value="YbaB_DNA_bd"/>
    <property type="match status" value="1"/>
</dbReference>
<dbReference type="PIRSF" id="PIRSF004555">
    <property type="entry name" value="UCP004555"/>
    <property type="match status" value="1"/>
</dbReference>
<dbReference type="SUPFAM" id="SSF82607">
    <property type="entry name" value="YbaB-like"/>
    <property type="match status" value="1"/>
</dbReference>
<accession>Q5H402</accession>
<reference key="1">
    <citation type="journal article" date="2005" name="Nucleic Acids Res.">
        <title>The genome sequence of Xanthomonas oryzae pathovar oryzae KACC10331, the bacterial blight pathogen of rice.</title>
        <authorList>
            <person name="Lee B.-M."/>
            <person name="Park Y.-J."/>
            <person name="Park D.-S."/>
            <person name="Kang H.-W."/>
            <person name="Kim J.-G."/>
            <person name="Song E.-S."/>
            <person name="Park I.-C."/>
            <person name="Yoon U.-H."/>
            <person name="Hahn J.-H."/>
            <person name="Koo B.-S."/>
            <person name="Lee G.-B."/>
            <person name="Kim H."/>
            <person name="Park H.-S."/>
            <person name="Yoon K.-O."/>
            <person name="Kim J.-H."/>
            <person name="Jung C.-H."/>
            <person name="Koh N.-H."/>
            <person name="Seo J.-S."/>
            <person name="Go S.-J."/>
        </authorList>
    </citation>
    <scope>NUCLEOTIDE SEQUENCE [LARGE SCALE GENOMIC DNA]</scope>
    <source>
        <strain>KACC10331 / KXO85</strain>
    </source>
</reference>
<sequence>MRGNIAQLMQQAQKMQENLQRAQEELAKLEVTGTAGGGMVNVTLTGAKECRKVRIDPSILSDQEMAEDLIAAAFNDASNKIDAESKDRMGSATAGMQLPPGMKLPF</sequence>
<comment type="function">
    <text evidence="1">Binds to DNA and alters its conformation. May be involved in regulation of gene expression, nucleoid organization and DNA protection.</text>
</comment>
<comment type="subunit">
    <text evidence="1">Homodimer.</text>
</comment>
<comment type="subcellular location">
    <subcellularLocation>
        <location evidence="1">Cytoplasm</location>
        <location evidence="1">Nucleoid</location>
    </subcellularLocation>
</comment>
<comment type="similarity">
    <text evidence="1">Belongs to the YbaB/EbfC family.</text>
</comment>
<proteinExistence type="inferred from homology"/>
<feature type="chain" id="PRO_1000003869" description="Nucleoid-associated protein XOO1065">
    <location>
        <begin position="1"/>
        <end position="106"/>
    </location>
</feature>
<feature type="region of interest" description="Disordered" evidence="2">
    <location>
        <begin position="80"/>
        <end position="106"/>
    </location>
</feature>
<feature type="compositionally biased region" description="Basic and acidic residues" evidence="2">
    <location>
        <begin position="80"/>
        <end position="89"/>
    </location>
</feature>
<organism>
    <name type="scientific">Xanthomonas oryzae pv. oryzae (strain KACC10331 / KXO85)</name>
    <dbReference type="NCBI Taxonomy" id="291331"/>
    <lineage>
        <taxon>Bacteria</taxon>
        <taxon>Pseudomonadati</taxon>
        <taxon>Pseudomonadota</taxon>
        <taxon>Gammaproteobacteria</taxon>
        <taxon>Lysobacterales</taxon>
        <taxon>Lysobacteraceae</taxon>
        <taxon>Xanthomonas</taxon>
    </lineage>
</organism>
<evidence type="ECO:0000255" key="1">
    <source>
        <dbReference type="HAMAP-Rule" id="MF_00274"/>
    </source>
</evidence>
<evidence type="ECO:0000256" key="2">
    <source>
        <dbReference type="SAM" id="MobiDB-lite"/>
    </source>
</evidence>
<keyword id="KW-0963">Cytoplasm</keyword>
<keyword id="KW-0238">DNA-binding</keyword>
<keyword id="KW-1185">Reference proteome</keyword>